<organism>
    <name type="scientific">Arthroderma otae (strain ATCC MYA-4605 / CBS 113480)</name>
    <name type="common">Microsporum canis</name>
    <dbReference type="NCBI Taxonomy" id="554155"/>
    <lineage>
        <taxon>Eukaryota</taxon>
        <taxon>Fungi</taxon>
        <taxon>Dikarya</taxon>
        <taxon>Ascomycota</taxon>
        <taxon>Pezizomycotina</taxon>
        <taxon>Eurotiomycetes</taxon>
        <taxon>Eurotiomycetidae</taxon>
        <taxon>Onygenales</taxon>
        <taxon>Arthrodermataceae</taxon>
        <taxon>Microsporum</taxon>
    </lineage>
</organism>
<comment type="function">
    <text evidence="1">Secreted tripeptidyl-peptidase which degrades proteins at acidic pHs and is involved in virulence.</text>
</comment>
<comment type="catalytic activity">
    <reaction>
        <text>Release of an N-terminal tripeptide from a polypeptide.</text>
        <dbReference type="EC" id="3.4.14.10"/>
    </reaction>
</comment>
<comment type="cofactor">
    <cofactor evidence="1">
        <name>Ca(2+)</name>
        <dbReference type="ChEBI" id="CHEBI:29108"/>
    </cofactor>
    <text evidence="1">Binds 1 Ca(2+) ion per subunit.</text>
</comment>
<comment type="subcellular location">
    <subcellularLocation>
        <location evidence="1">Secreted</location>
        <location evidence="1">Extracellular space</location>
    </subcellularLocation>
</comment>
<accession>C5FHK0</accession>
<protein>
    <recommendedName>
        <fullName>Tripeptidyl-peptidase SED1</fullName>
        <ecNumber>3.4.14.10</ecNumber>
    </recommendedName>
    <alternativeName>
        <fullName>Sedolisin-A</fullName>
    </alternativeName>
</protein>
<gene>
    <name type="primary">SED1</name>
    <name type="ORF">MCYG_01559</name>
</gene>
<proteinExistence type="inferred from homology"/>
<name>SED1_ARTOC</name>
<keyword id="KW-0106">Calcium</keyword>
<keyword id="KW-0325">Glycoprotein</keyword>
<keyword id="KW-0378">Hydrolase</keyword>
<keyword id="KW-0479">Metal-binding</keyword>
<keyword id="KW-0645">Protease</keyword>
<keyword id="KW-1185">Reference proteome</keyword>
<keyword id="KW-0964">Secreted</keyword>
<keyword id="KW-0720">Serine protease</keyword>
<keyword id="KW-0732">Signal</keyword>
<keyword id="KW-0843">Virulence</keyword>
<keyword id="KW-0865">Zymogen</keyword>
<evidence type="ECO:0000250" key="1"/>
<evidence type="ECO:0000255" key="2"/>
<dbReference type="EC" id="3.4.14.10"/>
<dbReference type="EMBL" id="DS995702">
    <property type="protein sequence ID" value="EEQ28740.1"/>
    <property type="molecule type" value="Genomic_DNA"/>
</dbReference>
<dbReference type="RefSeq" id="XP_002848625.1">
    <property type="nucleotide sequence ID" value="XM_002848579.1"/>
</dbReference>
<dbReference type="SMR" id="C5FHK0"/>
<dbReference type="STRING" id="554155.C5FHK0"/>
<dbReference type="GlyCosmos" id="C5FHK0">
    <property type="glycosylation" value="5 sites, No reported glycans"/>
</dbReference>
<dbReference type="GeneID" id="9230764"/>
<dbReference type="VEuPathDB" id="FungiDB:MCYG_01559"/>
<dbReference type="eggNOG" id="ENOG502QZ4I">
    <property type="taxonomic scope" value="Eukaryota"/>
</dbReference>
<dbReference type="HOGENOM" id="CLU_013783_4_0_1"/>
<dbReference type="OMA" id="LDFQYAM"/>
<dbReference type="OrthoDB" id="409122at2759"/>
<dbReference type="Proteomes" id="UP000002035">
    <property type="component" value="Unassembled WGS sequence"/>
</dbReference>
<dbReference type="GO" id="GO:0005576">
    <property type="term" value="C:extracellular region"/>
    <property type="evidence" value="ECO:0007669"/>
    <property type="project" value="UniProtKB-SubCell"/>
</dbReference>
<dbReference type="GO" id="GO:0046872">
    <property type="term" value="F:metal ion binding"/>
    <property type="evidence" value="ECO:0007669"/>
    <property type="project" value="UniProtKB-KW"/>
</dbReference>
<dbReference type="GO" id="GO:0004252">
    <property type="term" value="F:serine-type endopeptidase activity"/>
    <property type="evidence" value="ECO:0007669"/>
    <property type="project" value="InterPro"/>
</dbReference>
<dbReference type="GO" id="GO:0008240">
    <property type="term" value="F:tripeptidyl-peptidase activity"/>
    <property type="evidence" value="ECO:0007669"/>
    <property type="project" value="UniProtKB-EC"/>
</dbReference>
<dbReference type="GO" id="GO:0006508">
    <property type="term" value="P:proteolysis"/>
    <property type="evidence" value="ECO:0007669"/>
    <property type="project" value="UniProtKB-KW"/>
</dbReference>
<dbReference type="CDD" id="cd04056">
    <property type="entry name" value="Peptidases_S53"/>
    <property type="match status" value="1"/>
</dbReference>
<dbReference type="CDD" id="cd11377">
    <property type="entry name" value="Pro-peptidase_S53"/>
    <property type="match status" value="1"/>
</dbReference>
<dbReference type="Gene3D" id="3.40.50.200">
    <property type="entry name" value="Peptidase S8/S53 domain"/>
    <property type="match status" value="1"/>
</dbReference>
<dbReference type="InterPro" id="IPR000209">
    <property type="entry name" value="Peptidase_S8/S53_dom"/>
</dbReference>
<dbReference type="InterPro" id="IPR036852">
    <property type="entry name" value="Peptidase_S8/S53_dom_sf"/>
</dbReference>
<dbReference type="InterPro" id="IPR015366">
    <property type="entry name" value="S53_propep"/>
</dbReference>
<dbReference type="InterPro" id="IPR030400">
    <property type="entry name" value="Sedolisin_dom"/>
</dbReference>
<dbReference type="InterPro" id="IPR050819">
    <property type="entry name" value="Tripeptidyl-peptidase_I"/>
</dbReference>
<dbReference type="PANTHER" id="PTHR14218">
    <property type="entry name" value="PROTEASE S8 TRIPEPTIDYL PEPTIDASE I CLN2"/>
    <property type="match status" value="1"/>
</dbReference>
<dbReference type="PANTHER" id="PTHR14218:SF19">
    <property type="entry name" value="SERINE PROTEASE AORO, PUTATIVE (AFU_ORTHOLOGUE AFUA_6G10250)-RELATED"/>
    <property type="match status" value="1"/>
</dbReference>
<dbReference type="Pfam" id="PF00082">
    <property type="entry name" value="Peptidase_S8"/>
    <property type="match status" value="1"/>
</dbReference>
<dbReference type="Pfam" id="PF09286">
    <property type="entry name" value="Pro-kuma_activ"/>
    <property type="match status" value="1"/>
</dbReference>
<dbReference type="SMART" id="SM00944">
    <property type="entry name" value="Pro-kuma_activ"/>
    <property type="match status" value="1"/>
</dbReference>
<dbReference type="SUPFAM" id="SSF54897">
    <property type="entry name" value="Protease propeptides/inhibitors"/>
    <property type="match status" value="1"/>
</dbReference>
<dbReference type="SUPFAM" id="SSF52743">
    <property type="entry name" value="Subtilisin-like"/>
    <property type="match status" value="1"/>
</dbReference>
<dbReference type="PROSITE" id="PS51695">
    <property type="entry name" value="SEDOLISIN"/>
    <property type="match status" value="1"/>
</dbReference>
<reference key="1">
    <citation type="journal article" date="2012" name="MBio">
        <title>Comparative genome analysis of Trichophyton rubrum and related dermatophytes reveals candidate genes involved in infection.</title>
        <authorList>
            <person name="Martinez D.A."/>
            <person name="Oliver B.G."/>
            <person name="Graeser Y."/>
            <person name="Goldberg J.M."/>
            <person name="Li W."/>
            <person name="Martinez-Rossi N.M."/>
            <person name="Monod M."/>
            <person name="Shelest E."/>
            <person name="Barton R.C."/>
            <person name="Birch E."/>
            <person name="Brakhage A.A."/>
            <person name="Chen Z."/>
            <person name="Gurr S.J."/>
            <person name="Heiman D."/>
            <person name="Heitman J."/>
            <person name="Kosti I."/>
            <person name="Rossi A."/>
            <person name="Saif S."/>
            <person name="Samalova M."/>
            <person name="Saunders C.W."/>
            <person name="Shea T."/>
            <person name="Summerbell R.C."/>
            <person name="Xu J."/>
            <person name="Young S."/>
            <person name="Zeng Q."/>
            <person name="Birren B.W."/>
            <person name="Cuomo C.A."/>
            <person name="White T.C."/>
        </authorList>
    </citation>
    <scope>NUCLEOTIDE SEQUENCE [LARGE SCALE GENOMIC DNA]</scope>
    <source>
        <strain>ATCC MYA-4605 / CBS 113480</strain>
    </source>
</reference>
<feature type="signal peptide" evidence="2">
    <location>
        <begin position="1"/>
        <end position="20"/>
    </location>
</feature>
<feature type="propeptide" id="PRO_0000390742" description="Removed in mature form" evidence="1">
    <location>
        <begin position="21"/>
        <end position="231"/>
    </location>
</feature>
<feature type="chain" id="PRO_0000390743" description="Tripeptidyl-peptidase SED1">
    <location>
        <begin position="232"/>
        <end position="670"/>
    </location>
</feature>
<feature type="domain" description="Peptidase S53">
    <location>
        <begin position="241"/>
        <end position="669"/>
    </location>
</feature>
<feature type="active site" description="Charge relay system" evidence="1">
    <location>
        <position position="318"/>
    </location>
</feature>
<feature type="active site" description="Charge relay system" evidence="1">
    <location>
        <position position="322"/>
    </location>
</feature>
<feature type="active site" description="Charge relay system" evidence="1">
    <location>
        <position position="586"/>
    </location>
</feature>
<feature type="binding site" evidence="1">
    <location>
        <position position="627"/>
    </location>
    <ligand>
        <name>Ca(2+)</name>
        <dbReference type="ChEBI" id="CHEBI:29108"/>
    </ligand>
</feature>
<feature type="binding site" evidence="1">
    <location>
        <position position="628"/>
    </location>
    <ligand>
        <name>Ca(2+)</name>
        <dbReference type="ChEBI" id="CHEBI:29108"/>
    </ligand>
</feature>
<feature type="binding site" evidence="1">
    <location>
        <position position="647"/>
    </location>
    <ligand>
        <name>Ca(2+)</name>
        <dbReference type="ChEBI" id="CHEBI:29108"/>
    </ligand>
</feature>
<feature type="binding site" evidence="1">
    <location>
        <position position="649"/>
    </location>
    <ligand>
        <name>Ca(2+)</name>
        <dbReference type="ChEBI" id="CHEBI:29108"/>
    </ligand>
</feature>
<feature type="glycosylation site" description="N-linked (GlcNAc...) asparagine" evidence="2">
    <location>
        <position position="334"/>
    </location>
</feature>
<feature type="glycosylation site" description="N-linked (GlcNAc...) asparagine" evidence="2">
    <location>
        <position position="387"/>
    </location>
</feature>
<feature type="glycosylation site" description="N-linked (GlcNAc...) asparagine" evidence="2">
    <location>
        <position position="488"/>
    </location>
</feature>
<feature type="glycosylation site" description="N-linked (GlcNAc...) asparagine" evidence="2">
    <location>
        <position position="508"/>
    </location>
</feature>
<feature type="glycosylation site" description="N-linked (GlcNAc...) asparagine" evidence="2">
    <location>
        <position position="551"/>
    </location>
</feature>
<sequence>MSTMIFMYFIYIVLYASGIAANLSYHVHEKRSIPVWWQRVSRIDPHAFLPLTIALAQQNLEHAEDYLLSVSDPSSPQYAQYWTAEAVAAKFAPSEPTARKVMSWLNQSGIAPAGVRRSKSGGELYMNITAQEAEKLLHTTFYIYKHQLTNKTLAICEKYSVATFVEKYVDFITTTEQFHHGLRRRSFQDPEPRMPSGKSPGHYVELADDSFPFPYLSFGSSVGLLKNKILSDSLPSNCDKLITPDCLRALYHIPVRNTSHPDNSLGIIEFTWVGYLESDLDKFFNIFQPSMVGNRPKFESIDGGFIQTLVPSFAFNGEADLDIEYAMALTHPLNITNYQVGDIWSLGNMNNFLASLDSTYCSAVDPVYDPIYPDPTPANPPLPSGYNSSDCGTHKPTKVISISYAYEEGEFSPAYERRQCLEYLKLGLQGVTVVFASGDHGTATRDGMCGNTVIDSNQISDHEPSYVPTFPSTCPYVTSVGGTQVPANGSVLDAEVAFDTIITSSDGNVSSRLTSAGGFSNVFAVPGYQATATRDYLQRLQNKYTLPVNLNVTGFGSGRGFPDVAANAAAYATAVNGKLVKVYGTSASAPVFASVIAWINDARLNMGKQPVGFVNPVLYANPQVLNDVAKGSNYDCANLPAYHASSGWDPVTGLGTPNFDRMLDLFLQLS</sequence>